<dbReference type="EMBL" id="AL591688">
    <property type="protein sequence ID" value="CAC45948.1"/>
    <property type="molecule type" value="Genomic_DNA"/>
</dbReference>
<dbReference type="RefSeq" id="NP_385475.1">
    <property type="nucleotide sequence ID" value="NC_003047.1"/>
</dbReference>
<dbReference type="RefSeq" id="WP_003536519.1">
    <property type="nucleotide sequence ID" value="NC_003047.1"/>
</dbReference>
<dbReference type="SMR" id="Q92QF7"/>
<dbReference type="EnsemblBacteria" id="CAC45948">
    <property type="protein sequence ID" value="CAC45948"/>
    <property type="gene ID" value="SMc01296"/>
</dbReference>
<dbReference type="KEGG" id="sme:SMc01296"/>
<dbReference type="PATRIC" id="fig|266834.11.peg.2785"/>
<dbReference type="eggNOG" id="COG0199">
    <property type="taxonomic scope" value="Bacteria"/>
</dbReference>
<dbReference type="HOGENOM" id="CLU_139869_0_1_5"/>
<dbReference type="OrthoDB" id="9810484at2"/>
<dbReference type="Proteomes" id="UP000001976">
    <property type="component" value="Chromosome"/>
</dbReference>
<dbReference type="GO" id="GO:0005737">
    <property type="term" value="C:cytoplasm"/>
    <property type="evidence" value="ECO:0007669"/>
    <property type="project" value="UniProtKB-ARBA"/>
</dbReference>
<dbReference type="GO" id="GO:0015935">
    <property type="term" value="C:small ribosomal subunit"/>
    <property type="evidence" value="ECO:0007669"/>
    <property type="project" value="TreeGrafter"/>
</dbReference>
<dbReference type="GO" id="GO:0019843">
    <property type="term" value="F:rRNA binding"/>
    <property type="evidence" value="ECO:0007669"/>
    <property type="project" value="UniProtKB-UniRule"/>
</dbReference>
<dbReference type="GO" id="GO:0003735">
    <property type="term" value="F:structural constituent of ribosome"/>
    <property type="evidence" value="ECO:0007669"/>
    <property type="project" value="InterPro"/>
</dbReference>
<dbReference type="GO" id="GO:0006412">
    <property type="term" value="P:translation"/>
    <property type="evidence" value="ECO:0007669"/>
    <property type="project" value="UniProtKB-UniRule"/>
</dbReference>
<dbReference type="FunFam" id="1.10.287.1480:FF:000001">
    <property type="entry name" value="30S ribosomal protein S14"/>
    <property type="match status" value="1"/>
</dbReference>
<dbReference type="Gene3D" id="1.10.287.1480">
    <property type="match status" value="1"/>
</dbReference>
<dbReference type="HAMAP" id="MF_00537">
    <property type="entry name" value="Ribosomal_uS14_1"/>
    <property type="match status" value="1"/>
</dbReference>
<dbReference type="InterPro" id="IPR001209">
    <property type="entry name" value="Ribosomal_uS14"/>
</dbReference>
<dbReference type="InterPro" id="IPR023036">
    <property type="entry name" value="Ribosomal_uS14_bac/plastid"/>
</dbReference>
<dbReference type="InterPro" id="IPR018271">
    <property type="entry name" value="Ribosomal_uS14_CS"/>
</dbReference>
<dbReference type="NCBIfam" id="NF006477">
    <property type="entry name" value="PRK08881.1"/>
    <property type="match status" value="1"/>
</dbReference>
<dbReference type="PANTHER" id="PTHR19836">
    <property type="entry name" value="30S RIBOSOMAL PROTEIN S14"/>
    <property type="match status" value="1"/>
</dbReference>
<dbReference type="PANTHER" id="PTHR19836:SF19">
    <property type="entry name" value="SMALL RIBOSOMAL SUBUNIT PROTEIN US14M"/>
    <property type="match status" value="1"/>
</dbReference>
<dbReference type="Pfam" id="PF00253">
    <property type="entry name" value="Ribosomal_S14"/>
    <property type="match status" value="1"/>
</dbReference>
<dbReference type="SUPFAM" id="SSF57716">
    <property type="entry name" value="Glucocorticoid receptor-like (DNA-binding domain)"/>
    <property type="match status" value="1"/>
</dbReference>
<dbReference type="PROSITE" id="PS00527">
    <property type="entry name" value="RIBOSOMAL_S14"/>
    <property type="match status" value="1"/>
</dbReference>
<protein>
    <recommendedName>
        <fullName evidence="1">Small ribosomal subunit protein uS14</fullName>
    </recommendedName>
    <alternativeName>
        <fullName evidence="2">30S ribosomal protein S14</fullName>
    </alternativeName>
</protein>
<evidence type="ECO:0000255" key="1">
    <source>
        <dbReference type="HAMAP-Rule" id="MF_00537"/>
    </source>
</evidence>
<evidence type="ECO:0000305" key="2"/>
<reference key="1">
    <citation type="journal article" date="2001" name="Proc. Natl. Acad. Sci. U.S.A.">
        <title>Analysis of the chromosome sequence of the legume symbiont Sinorhizobium meliloti strain 1021.</title>
        <authorList>
            <person name="Capela D."/>
            <person name="Barloy-Hubler F."/>
            <person name="Gouzy J."/>
            <person name="Bothe G."/>
            <person name="Ampe F."/>
            <person name="Batut J."/>
            <person name="Boistard P."/>
            <person name="Becker A."/>
            <person name="Boutry M."/>
            <person name="Cadieu E."/>
            <person name="Dreano S."/>
            <person name="Gloux S."/>
            <person name="Godrie T."/>
            <person name="Goffeau A."/>
            <person name="Kahn D."/>
            <person name="Kiss E."/>
            <person name="Lelaure V."/>
            <person name="Masuy D."/>
            <person name="Pohl T."/>
            <person name="Portetelle D."/>
            <person name="Puehler A."/>
            <person name="Purnelle B."/>
            <person name="Ramsperger U."/>
            <person name="Renard C."/>
            <person name="Thebault P."/>
            <person name="Vandenbol M."/>
            <person name="Weidner S."/>
            <person name="Galibert F."/>
        </authorList>
    </citation>
    <scope>NUCLEOTIDE SEQUENCE [LARGE SCALE GENOMIC DNA]</scope>
    <source>
        <strain>1021</strain>
    </source>
</reference>
<reference key="2">
    <citation type="journal article" date="2001" name="Science">
        <title>The composite genome of the legume symbiont Sinorhizobium meliloti.</title>
        <authorList>
            <person name="Galibert F."/>
            <person name="Finan T.M."/>
            <person name="Long S.R."/>
            <person name="Puehler A."/>
            <person name="Abola P."/>
            <person name="Ampe F."/>
            <person name="Barloy-Hubler F."/>
            <person name="Barnett M.J."/>
            <person name="Becker A."/>
            <person name="Boistard P."/>
            <person name="Bothe G."/>
            <person name="Boutry M."/>
            <person name="Bowser L."/>
            <person name="Buhrmester J."/>
            <person name="Cadieu E."/>
            <person name="Capela D."/>
            <person name="Chain P."/>
            <person name="Cowie A."/>
            <person name="Davis R.W."/>
            <person name="Dreano S."/>
            <person name="Federspiel N.A."/>
            <person name="Fisher R.F."/>
            <person name="Gloux S."/>
            <person name="Godrie T."/>
            <person name="Goffeau A."/>
            <person name="Golding B."/>
            <person name="Gouzy J."/>
            <person name="Gurjal M."/>
            <person name="Hernandez-Lucas I."/>
            <person name="Hong A."/>
            <person name="Huizar L."/>
            <person name="Hyman R.W."/>
            <person name="Jones T."/>
            <person name="Kahn D."/>
            <person name="Kahn M.L."/>
            <person name="Kalman S."/>
            <person name="Keating D.H."/>
            <person name="Kiss E."/>
            <person name="Komp C."/>
            <person name="Lelaure V."/>
            <person name="Masuy D."/>
            <person name="Palm C."/>
            <person name="Peck M.C."/>
            <person name="Pohl T.M."/>
            <person name="Portetelle D."/>
            <person name="Purnelle B."/>
            <person name="Ramsperger U."/>
            <person name="Surzycki R."/>
            <person name="Thebault P."/>
            <person name="Vandenbol M."/>
            <person name="Vorhoelter F.J."/>
            <person name="Weidner S."/>
            <person name="Wells D.H."/>
            <person name="Wong K."/>
            <person name="Yeh K.-C."/>
            <person name="Batut J."/>
        </authorList>
    </citation>
    <scope>NUCLEOTIDE SEQUENCE [LARGE SCALE GENOMIC DNA]</scope>
    <source>
        <strain>1021</strain>
    </source>
</reference>
<organism>
    <name type="scientific">Rhizobium meliloti (strain 1021)</name>
    <name type="common">Ensifer meliloti</name>
    <name type="synonym">Sinorhizobium meliloti</name>
    <dbReference type="NCBI Taxonomy" id="266834"/>
    <lineage>
        <taxon>Bacteria</taxon>
        <taxon>Pseudomonadati</taxon>
        <taxon>Pseudomonadota</taxon>
        <taxon>Alphaproteobacteria</taxon>
        <taxon>Hyphomicrobiales</taxon>
        <taxon>Rhizobiaceae</taxon>
        <taxon>Sinorhizobium/Ensifer group</taxon>
        <taxon>Sinorhizobium</taxon>
    </lineage>
</organism>
<keyword id="KW-1185">Reference proteome</keyword>
<keyword id="KW-0687">Ribonucleoprotein</keyword>
<keyword id="KW-0689">Ribosomal protein</keyword>
<keyword id="KW-0694">RNA-binding</keyword>
<keyword id="KW-0699">rRNA-binding</keyword>
<feature type="chain" id="PRO_0000130920" description="Small ribosomal subunit protein uS14">
    <location>
        <begin position="1"/>
        <end position="101"/>
    </location>
</feature>
<sequence>MAKTSAVEKNKRRRKLVANHAAKRAVLKAIIMNQSLPIEERFKATLKLAELPRDGSKTRIRNRCEVTGRPRAYYRKLRMSRIALRELGNLGKVPGVVKSSW</sequence>
<comment type="function">
    <text evidence="1">Binds 16S rRNA, required for the assembly of 30S particles and may also be responsible for determining the conformation of the 16S rRNA at the A site.</text>
</comment>
<comment type="subunit">
    <text evidence="1">Part of the 30S ribosomal subunit. Contacts proteins S3 and S10.</text>
</comment>
<comment type="similarity">
    <text evidence="1">Belongs to the universal ribosomal protein uS14 family.</text>
</comment>
<accession>Q92QF7</accession>
<proteinExistence type="inferred from homology"/>
<gene>
    <name evidence="1" type="primary">rpsN</name>
    <name type="ordered locus">R01369</name>
    <name type="ORF">SMc01296</name>
</gene>
<name>RS14_RHIME</name>